<proteinExistence type="inferred from homology"/>
<sequence length="166" mass="17554">MTWTTPDLCDRFPEVAVAEPLFRHFGGRTTFSGPIATVRCVEDNSRIRELASTPGDGRVLVVDGQGSLRQALFGDQIGAQAVANGWAGVLIHGCVRDVEILAGLPLGVLALAACPRRTERRDLGDVDVPVNFAGVAFVPGHWLYADANGVVVAATPLSLEIAGVEH</sequence>
<organism>
    <name type="scientific">Xanthomonas campestris pv. campestris (strain 8004)</name>
    <dbReference type="NCBI Taxonomy" id="314565"/>
    <lineage>
        <taxon>Bacteria</taxon>
        <taxon>Pseudomonadati</taxon>
        <taxon>Pseudomonadota</taxon>
        <taxon>Gammaproteobacteria</taxon>
        <taxon>Lysobacterales</taxon>
        <taxon>Lysobacteraceae</taxon>
        <taxon>Xanthomonas</taxon>
    </lineage>
</organism>
<gene>
    <name type="ordered locus">XC_1480</name>
</gene>
<comment type="function">
    <text evidence="1">Catalyzes the aldol cleavage of 4-hydroxy-4-methyl-2-oxoglutarate (HMG) into 2 molecules of pyruvate. Also contains a secondary oxaloacetate (OAA) decarboxylase activity due to the common pyruvate enolate transition state formed following C-C bond cleavage in the retro-aldol and decarboxylation reactions (By similarity).</text>
</comment>
<comment type="catalytic activity">
    <reaction>
        <text>4-hydroxy-4-methyl-2-oxoglutarate = 2 pyruvate</text>
        <dbReference type="Rhea" id="RHEA:22748"/>
        <dbReference type="ChEBI" id="CHEBI:15361"/>
        <dbReference type="ChEBI" id="CHEBI:58276"/>
        <dbReference type="EC" id="4.1.3.17"/>
    </reaction>
</comment>
<comment type="catalytic activity">
    <reaction>
        <text>oxaloacetate + H(+) = pyruvate + CO2</text>
        <dbReference type="Rhea" id="RHEA:15641"/>
        <dbReference type="ChEBI" id="CHEBI:15361"/>
        <dbReference type="ChEBI" id="CHEBI:15378"/>
        <dbReference type="ChEBI" id="CHEBI:16452"/>
        <dbReference type="ChEBI" id="CHEBI:16526"/>
        <dbReference type="EC" id="4.1.1.112"/>
    </reaction>
</comment>
<comment type="cofactor">
    <cofactor evidence="1">
        <name>a divalent metal cation</name>
        <dbReference type="ChEBI" id="CHEBI:60240"/>
    </cofactor>
    <text evidence="1">Divalent metal cation.</text>
</comment>
<comment type="subunit">
    <text evidence="1">Homotrimer.</text>
</comment>
<comment type="similarity">
    <text evidence="2">Belongs to the class II aldolase/RraA-like family.</text>
</comment>
<name>RRAAH_XANC8</name>
<dbReference type="EC" id="4.1.3.17"/>
<dbReference type="EC" id="4.1.1.112"/>
<dbReference type="EMBL" id="CP000050">
    <property type="protein sequence ID" value="AAY48548.1"/>
    <property type="molecule type" value="Genomic_DNA"/>
</dbReference>
<dbReference type="SMR" id="Q4UWM5"/>
<dbReference type="KEGG" id="xcb:XC_1480"/>
<dbReference type="HOGENOM" id="CLU_072626_4_0_6"/>
<dbReference type="Proteomes" id="UP000000420">
    <property type="component" value="Chromosome"/>
</dbReference>
<dbReference type="GO" id="GO:0047443">
    <property type="term" value="F:4-hydroxy-4-methyl-2-oxoglutarate aldolase activity"/>
    <property type="evidence" value="ECO:0007669"/>
    <property type="project" value="UniProtKB-EC"/>
</dbReference>
<dbReference type="GO" id="GO:0046872">
    <property type="term" value="F:metal ion binding"/>
    <property type="evidence" value="ECO:0007669"/>
    <property type="project" value="UniProtKB-KW"/>
</dbReference>
<dbReference type="GO" id="GO:0008948">
    <property type="term" value="F:oxaloacetate decarboxylase activity"/>
    <property type="evidence" value="ECO:0007669"/>
    <property type="project" value="UniProtKB-EC"/>
</dbReference>
<dbReference type="GO" id="GO:0008428">
    <property type="term" value="F:ribonuclease inhibitor activity"/>
    <property type="evidence" value="ECO:0007669"/>
    <property type="project" value="InterPro"/>
</dbReference>
<dbReference type="GO" id="GO:0051252">
    <property type="term" value="P:regulation of RNA metabolic process"/>
    <property type="evidence" value="ECO:0007669"/>
    <property type="project" value="InterPro"/>
</dbReference>
<dbReference type="CDD" id="cd16841">
    <property type="entry name" value="RraA_family"/>
    <property type="match status" value="1"/>
</dbReference>
<dbReference type="Gene3D" id="3.50.30.40">
    <property type="entry name" value="Ribonuclease E inhibitor RraA/RraA-like"/>
    <property type="match status" value="1"/>
</dbReference>
<dbReference type="InterPro" id="IPR010203">
    <property type="entry name" value="RraA"/>
</dbReference>
<dbReference type="InterPro" id="IPR005493">
    <property type="entry name" value="RraA/RraA-like"/>
</dbReference>
<dbReference type="InterPro" id="IPR036704">
    <property type="entry name" value="RraA/RraA-like_sf"/>
</dbReference>
<dbReference type="NCBIfam" id="TIGR01935">
    <property type="entry name" value="NOT-MenG"/>
    <property type="match status" value="1"/>
</dbReference>
<dbReference type="NCBIfam" id="NF006875">
    <property type="entry name" value="PRK09372.1"/>
    <property type="match status" value="1"/>
</dbReference>
<dbReference type="PANTHER" id="PTHR33254">
    <property type="entry name" value="4-HYDROXY-4-METHYL-2-OXOGLUTARATE ALDOLASE 3-RELATED"/>
    <property type="match status" value="1"/>
</dbReference>
<dbReference type="PANTHER" id="PTHR33254:SF29">
    <property type="entry name" value="REGULATOR OF RIBONUCLEASE ACTIVITY A"/>
    <property type="match status" value="1"/>
</dbReference>
<dbReference type="Pfam" id="PF03737">
    <property type="entry name" value="RraA-like"/>
    <property type="match status" value="1"/>
</dbReference>
<dbReference type="SUPFAM" id="SSF89562">
    <property type="entry name" value="RraA-like"/>
    <property type="match status" value="1"/>
</dbReference>
<evidence type="ECO:0000250" key="1"/>
<evidence type="ECO:0000305" key="2"/>
<keyword id="KW-0456">Lyase</keyword>
<keyword id="KW-0479">Metal-binding</keyword>
<reference key="1">
    <citation type="journal article" date="2005" name="Genome Res.">
        <title>Comparative and functional genomic analyses of the pathogenicity of phytopathogen Xanthomonas campestris pv. campestris.</title>
        <authorList>
            <person name="Qian W."/>
            <person name="Jia Y."/>
            <person name="Ren S.-X."/>
            <person name="He Y.-Q."/>
            <person name="Feng J.-X."/>
            <person name="Lu L.-F."/>
            <person name="Sun Q."/>
            <person name="Ying G."/>
            <person name="Tang D.-J."/>
            <person name="Tang H."/>
            <person name="Wu W."/>
            <person name="Hao P."/>
            <person name="Wang L."/>
            <person name="Jiang B.-L."/>
            <person name="Zeng S."/>
            <person name="Gu W.-Y."/>
            <person name="Lu G."/>
            <person name="Rong L."/>
            <person name="Tian Y."/>
            <person name="Yao Z."/>
            <person name="Fu G."/>
            <person name="Chen B."/>
            <person name="Fang R."/>
            <person name="Qiang B."/>
            <person name="Chen Z."/>
            <person name="Zhao G.-P."/>
            <person name="Tang J.-L."/>
            <person name="He C."/>
        </authorList>
    </citation>
    <scope>NUCLEOTIDE SEQUENCE [LARGE SCALE GENOMIC DNA]</scope>
    <source>
        <strain>8004</strain>
    </source>
</reference>
<protein>
    <recommendedName>
        <fullName>Putative 4-hydroxy-4-methyl-2-oxoglutarate aldolase</fullName>
        <shortName>HMG aldolase</shortName>
        <ecNumber>4.1.3.17</ecNumber>
    </recommendedName>
    <alternativeName>
        <fullName>Oxaloacetate decarboxylase</fullName>
        <shortName>OAA decarboxylase</shortName>
        <ecNumber>4.1.1.112</ecNumber>
    </alternativeName>
    <alternativeName>
        <fullName>Regulator of ribonuclease activity homolog</fullName>
    </alternativeName>
    <alternativeName>
        <fullName>RraA-like protein</fullName>
    </alternativeName>
</protein>
<accession>Q4UWM5</accession>
<feature type="chain" id="PRO_1000013879" description="Putative 4-hydroxy-4-methyl-2-oxoglutarate aldolase">
    <location>
        <begin position="1"/>
        <end position="166"/>
    </location>
</feature>
<feature type="binding site" evidence="1">
    <location>
        <begin position="74"/>
        <end position="77"/>
    </location>
    <ligand>
        <name>substrate</name>
    </ligand>
</feature>
<feature type="binding site" evidence="1">
    <location>
        <position position="96"/>
    </location>
    <ligand>
        <name>substrate</name>
    </ligand>
</feature>
<feature type="binding site" evidence="1">
    <location>
        <position position="97"/>
    </location>
    <ligand>
        <name>a divalent metal cation</name>
        <dbReference type="ChEBI" id="CHEBI:60240"/>
    </ligand>
</feature>